<protein>
    <recommendedName>
        <fullName>Protein MGF 360-13L</fullName>
    </recommendedName>
</protein>
<evidence type="ECO:0000250" key="1"/>
<evidence type="ECO:0000305" key="2"/>
<name>36013_ASFWA</name>
<organism>
    <name type="scientific">African swine fever virus (isolate Warthog/Namibia/Wart80/1980)</name>
    <name type="common">ASFV</name>
    <dbReference type="NCBI Taxonomy" id="561444"/>
    <lineage>
        <taxon>Viruses</taxon>
        <taxon>Varidnaviria</taxon>
        <taxon>Bamfordvirae</taxon>
        <taxon>Nucleocytoviricota</taxon>
        <taxon>Pokkesviricetes</taxon>
        <taxon>Asfuvirales</taxon>
        <taxon>Asfarviridae</taxon>
        <taxon>Asfivirus</taxon>
        <taxon>African swine fever virus</taxon>
    </lineage>
</organism>
<comment type="function">
    <text evidence="1">Plays a role in virus cell tropism, and may be required for efficient virus replication in macrophages.</text>
</comment>
<comment type="similarity">
    <text evidence="2">Belongs to the asfivirus MGF 360 family.</text>
</comment>
<proteinExistence type="inferred from homology"/>
<feature type="chain" id="PRO_0000373284" description="Protein MGF 360-13L">
    <location>
        <begin position="1"/>
        <end position="353"/>
    </location>
</feature>
<accession>P0C9Q2</accession>
<dbReference type="EMBL" id="AY261366">
    <property type="status" value="NOT_ANNOTATED_CDS"/>
    <property type="molecule type" value="Genomic_DNA"/>
</dbReference>
<dbReference type="SMR" id="P0C9Q2"/>
<dbReference type="Proteomes" id="UP000000858">
    <property type="component" value="Segment"/>
</dbReference>
<dbReference type="GO" id="GO:0042330">
    <property type="term" value="P:taxis"/>
    <property type="evidence" value="ECO:0007669"/>
    <property type="project" value="InterPro"/>
</dbReference>
<dbReference type="InterPro" id="IPR002595">
    <property type="entry name" value="ASFV_MGF360"/>
</dbReference>
<dbReference type="Pfam" id="PF01671">
    <property type="entry name" value="ASFV_360"/>
    <property type="match status" value="1"/>
</dbReference>
<reference key="1">
    <citation type="submission" date="2003-03" db="EMBL/GenBank/DDBJ databases">
        <title>African swine fever virus genomes.</title>
        <authorList>
            <person name="Kutish G.F."/>
            <person name="Rock D.L."/>
        </authorList>
    </citation>
    <scope>NUCLEOTIDE SEQUENCE [LARGE SCALE GENOMIC DNA]</scope>
</reference>
<gene>
    <name type="ordered locus">War-034</name>
</gene>
<organismHost>
    <name type="scientific">Ornithodoros</name>
    <name type="common">relapsing fever ticks</name>
    <dbReference type="NCBI Taxonomy" id="6937"/>
</organismHost>
<organismHost>
    <name type="scientific">Phacochoerus aethiopicus</name>
    <name type="common">Warthog</name>
    <dbReference type="NCBI Taxonomy" id="85517"/>
</organismHost>
<organismHost>
    <name type="scientific">Phacochoerus africanus</name>
    <name type="common">Warthog</name>
    <dbReference type="NCBI Taxonomy" id="41426"/>
</organismHost>
<organismHost>
    <name type="scientific">Potamochoerus larvatus</name>
    <name type="common">Bushpig</name>
    <dbReference type="NCBI Taxonomy" id="273792"/>
</organismHost>
<organismHost>
    <name type="scientific">Sus scrofa</name>
    <name type="common">Pig</name>
    <dbReference type="NCBI Taxonomy" id="9823"/>
</organismHost>
<sequence>MSLPLSLQTLVKKTVASQCLSTDEHCILKHCGLWWHDVPLKLCMDRGQIQIKSGFLGEDIDLHIALIIAVKENNYSLIKLFTEWGAHINYSLLSINTEHIRELCRQLGAKETLEDNDIFRIFTKIMHNKTSGRIILCHEIFMNNPNIENKFTIQLRGLICKRLWGLIEIKETDELNDLLVKYWYAKAVQYECKDAICFLDEKYTDLNEWRLKCLLYYNKIYELHEMYHKEKVQIDVHDMICLASTKDNNPLTIYYCYALGGNINQAMLTSVQYYNIGNIFFCIDLGGNAFEEGRAIAEQKGYHFLSHSLTLDIYSSDASLPLNLKDPEEISSLLKDYKSKNLSIIWEYSHNIL</sequence>